<sequence length="341" mass="36680">MTTQQPVAVLGGGSFGTAIANLLAENGHQVRQWMRDPEQAEAIRVNRENPRYLKGIKVRPEVEPVTDLTAALEVSELIFVALPSSALRSVLSPHIERLSGKMLVSLTKGIEAQSFKLMSQILEEIVPQARIGVLSGPNLAREIAEHALTATVVASEDEDLCQQVQAALHGRTFRVYASNDRFGVELGGALKNVYAIIAGMAVALDMGENTKSMLITRALAEMTRFAVSQGANPMTFLGLAGVGDLIVTCSSPKSRNYQVGFALGQGLSLEEAVTRLGEVAEGVNTLKVLKVKAQEVQVYMPLVAGLHAILFEGRTLSQVIEALMRAEPKTDVDFISITGFN</sequence>
<evidence type="ECO:0000255" key="1">
    <source>
        <dbReference type="HAMAP-Rule" id="MF_00394"/>
    </source>
</evidence>
<keyword id="KW-0963">Cytoplasm</keyword>
<keyword id="KW-0444">Lipid biosynthesis</keyword>
<keyword id="KW-0443">Lipid metabolism</keyword>
<keyword id="KW-0520">NAD</keyword>
<keyword id="KW-0521">NADP</keyword>
<keyword id="KW-0547">Nucleotide-binding</keyword>
<keyword id="KW-0560">Oxidoreductase</keyword>
<keyword id="KW-0594">Phospholipid biosynthesis</keyword>
<keyword id="KW-1208">Phospholipid metabolism</keyword>
<keyword id="KW-1185">Reference proteome</keyword>
<accession>Q883Y4</accession>
<reference key="1">
    <citation type="journal article" date="2003" name="Proc. Natl. Acad. Sci. U.S.A.">
        <title>The complete genome sequence of the Arabidopsis and tomato pathogen Pseudomonas syringae pv. tomato DC3000.</title>
        <authorList>
            <person name="Buell C.R."/>
            <person name="Joardar V."/>
            <person name="Lindeberg M."/>
            <person name="Selengut J."/>
            <person name="Paulsen I.T."/>
            <person name="Gwinn M.L."/>
            <person name="Dodson R.J."/>
            <person name="DeBoy R.T."/>
            <person name="Durkin A.S."/>
            <person name="Kolonay J.F."/>
            <person name="Madupu R."/>
            <person name="Daugherty S.C."/>
            <person name="Brinkac L.M."/>
            <person name="Beanan M.J."/>
            <person name="Haft D.H."/>
            <person name="Nelson W.C."/>
            <person name="Davidsen T.M."/>
            <person name="Zafar N."/>
            <person name="Zhou L."/>
            <person name="Liu J."/>
            <person name="Yuan Q."/>
            <person name="Khouri H.M."/>
            <person name="Fedorova N.B."/>
            <person name="Tran B."/>
            <person name="Russell D."/>
            <person name="Berry K.J."/>
            <person name="Utterback T.R."/>
            <person name="Van Aken S.E."/>
            <person name="Feldblyum T.V."/>
            <person name="D'Ascenzo M."/>
            <person name="Deng W.-L."/>
            <person name="Ramos A.R."/>
            <person name="Alfano J.R."/>
            <person name="Cartinhour S."/>
            <person name="Chatterjee A.K."/>
            <person name="Delaney T.P."/>
            <person name="Lazarowitz S.G."/>
            <person name="Martin G.B."/>
            <person name="Schneider D.J."/>
            <person name="Tang X."/>
            <person name="Bender C.L."/>
            <person name="White O."/>
            <person name="Fraser C.M."/>
            <person name="Collmer A."/>
        </authorList>
    </citation>
    <scope>NUCLEOTIDE SEQUENCE [LARGE SCALE GENOMIC DNA]</scope>
    <source>
        <strain>ATCC BAA-871 / DC3000</strain>
    </source>
</reference>
<protein>
    <recommendedName>
        <fullName evidence="1">Glycerol-3-phosphate dehydrogenase [NAD(P)+]</fullName>
        <ecNumber evidence="1">1.1.1.94</ecNumber>
    </recommendedName>
    <alternativeName>
        <fullName evidence="1">NAD(P)(+)-dependent glycerol-3-phosphate dehydrogenase</fullName>
    </alternativeName>
    <alternativeName>
        <fullName evidence="1">NAD(P)H-dependent dihydroxyacetone-phosphate reductase</fullName>
    </alternativeName>
</protein>
<feature type="chain" id="PRO_0000138011" description="Glycerol-3-phosphate dehydrogenase [NAD(P)+]">
    <location>
        <begin position="1"/>
        <end position="341"/>
    </location>
</feature>
<feature type="active site" description="Proton acceptor" evidence="1">
    <location>
        <position position="191"/>
    </location>
</feature>
<feature type="binding site" evidence="1">
    <location>
        <position position="14"/>
    </location>
    <ligand>
        <name>NADPH</name>
        <dbReference type="ChEBI" id="CHEBI:57783"/>
    </ligand>
</feature>
<feature type="binding site" evidence="1">
    <location>
        <position position="15"/>
    </location>
    <ligand>
        <name>NADPH</name>
        <dbReference type="ChEBI" id="CHEBI:57783"/>
    </ligand>
</feature>
<feature type="binding site" evidence="1">
    <location>
        <position position="35"/>
    </location>
    <ligand>
        <name>NADPH</name>
        <dbReference type="ChEBI" id="CHEBI:57783"/>
    </ligand>
</feature>
<feature type="binding site" evidence="1">
    <location>
        <position position="108"/>
    </location>
    <ligand>
        <name>NADPH</name>
        <dbReference type="ChEBI" id="CHEBI:57783"/>
    </ligand>
</feature>
<feature type="binding site" evidence="1">
    <location>
        <position position="108"/>
    </location>
    <ligand>
        <name>sn-glycerol 3-phosphate</name>
        <dbReference type="ChEBI" id="CHEBI:57597"/>
    </ligand>
</feature>
<feature type="binding site" evidence="1">
    <location>
        <position position="136"/>
    </location>
    <ligand>
        <name>sn-glycerol 3-phosphate</name>
        <dbReference type="ChEBI" id="CHEBI:57597"/>
    </ligand>
</feature>
<feature type="binding site" evidence="1">
    <location>
        <position position="140"/>
    </location>
    <ligand>
        <name>NADPH</name>
        <dbReference type="ChEBI" id="CHEBI:57783"/>
    </ligand>
</feature>
<feature type="binding site" evidence="1">
    <location>
        <position position="191"/>
    </location>
    <ligand>
        <name>sn-glycerol 3-phosphate</name>
        <dbReference type="ChEBI" id="CHEBI:57597"/>
    </ligand>
</feature>
<feature type="binding site" evidence="1">
    <location>
        <position position="244"/>
    </location>
    <ligand>
        <name>sn-glycerol 3-phosphate</name>
        <dbReference type="ChEBI" id="CHEBI:57597"/>
    </ligand>
</feature>
<feature type="binding site" evidence="1">
    <location>
        <position position="254"/>
    </location>
    <ligand>
        <name>sn-glycerol 3-phosphate</name>
        <dbReference type="ChEBI" id="CHEBI:57597"/>
    </ligand>
</feature>
<feature type="binding site" evidence="1">
    <location>
        <position position="255"/>
    </location>
    <ligand>
        <name>NADPH</name>
        <dbReference type="ChEBI" id="CHEBI:57783"/>
    </ligand>
</feature>
<feature type="binding site" evidence="1">
    <location>
        <position position="255"/>
    </location>
    <ligand>
        <name>sn-glycerol 3-phosphate</name>
        <dbReference type="ChEBI" id="CHEBI:57597"/>
    </ligand>
</feature>
<feature type="binding site" evidence="1">
    <location>
        <position position="256"/>
    </location>
    <ligand>
        <name>sn-glycerol 3-phosphate</name>
        <dbReference type="ChEBI" id="CHEBI:57597"/>
    </ligand>
</feature>
<feature type="binding site" evidence="1">
    <location>
        <position position="279"/>
    </location>
    <ligand>
        <name>NADPH</name>
        <dbReference type="ChEBI" id="CHEBI:57783"/>
    </ligand>
</feature>
<feature type="binding site" evidence="1">
    <location>
        <position position="281"/>
    </location>
    <ligand>
        <name>NADPH</name>
        <dbReference type="ChEBI" id="CHEBI:57783"/>
    </ligand>
</feature>
<name>GPDA_PSESM</name>
<proteinExistence type="inferred from homology"/>
<organism>
    <name type="scientific">Pseudomonas syringae pv. tomato (strain ATCC BAA-871 / DC3000)</name>
    <dbReference type="NCBI Taxonomy" id="223283"/>
    <lineage>
        <taxon>Bacteria</taxon>
        <taxon>Pseudomonadati</taxon>
        <taxon>Pseudomonadota</taxon>
        <taxon>Gammaproteobacteria</taxon>
        <taxon>Pseudomonadales</taxon>
        <taxon>Pseudomonadaceae</taxon>
        <taxon>Pseudomonas</taxon>
    </lineage>
</organism>
<dbReference type="EC" id="1.1.1.94" evidence="1"/>
<dbReference type="EMBL" id="AE016853">
    <property type="protein sequence ID" value="AAO55729.1"/>
    <property type="molecule type" value="Genomic_DNA"/>
</dbReference>
<dbReference type="RefSeq" id="NP_792034.1">
    <property type="nucleotide sequence ID" value="NC_004578.1"/>
</dbReference>
<dbReference type="RefSeq" id="WP_005769608.1">
    <property type="nucleotide sequence ID" value="NC_004578.1"/>
</dbReference>
<dbReference type="SMR" id="Q883Y4"/>
<dbReference type="STRING" id="223283.PSPTO_2213"/>
<dbReference type="GeneID" id="1183864"/>
<dbReference type="KEGG" id="pst:PSPTO_2213"/>
<dbReference type="PATRIC" id="fig|223283.9.peg.2245"/>
<dbReference type="eggNOG" id="COG0240">
    <property type="taxonomic scope" value="Bacteria"/>
</dbReference>
<dbReference type="HOGENOM" id="CLU_033449_0_2_6"/>
<dbReference type="OrthoDB" id="9812273at2"/>
<dbReference type="PhylomeDB" id="Q883Y4"/>
<dbReference type="UniPathway" id="UPA00940"/>
<dbReference type="Proteomes" id="UP000002515">
    <property type="component" value="Chromosome"/>
</dbReference>
<dbReference type="GO" id="GO:0005829">
    <property type="term" value="C:cytosol"/>
    <property type="evidence" value="ECO:0007669"/>
    <property type="project" value="TreeGrafter"/>
</dbReference>
<dbReference type="GO" id="GO:0047952">
    <property type="term" value="F:glycerol-3-phosphate dehydrogenase [NAD(P)+] activity"/>
    <property type="evidence" value="ECO:0007669"/>
    <property type="project" value="UniProtKB-UniRule"/>
</dbReference>
<dbReference type="GO" id="GO:0051287">
    <property type="term" value="F:NAD binding"/>
    <property type="evidence" value="ECO:0007669"/>
    <property type="project" value="InterPro"/>
</dbReference>
<dbReference type="GO" id="GO:0005975">
    <property type="term" value="P:carbohydrate metabolic process"/>
    <property type="evidence" value="ECO:0007669"/>
    <property type="project" value="InterPro"/>
</dbReference>
<dbReference type="GO" id="GO:0046167">
    <property type="term" value="P:glycerol-3-phosphate biosynthetic process"/>
    <property type="evidence" value="ECO:0007669"/>
    <property type="project" value="UniProtKB-UniRule"/>
</dbReference>
<dbReference type="GO" id="GO:0046168">
    <property type="term" value="P:glycerol-3-phosphate catabolic process"/>
    <property type="evidence" value="ECO:0007669"/>
    <property type="project" value="InterPro"/>
</dbReference>
<dbReference type="GO" id="GO:0046474">
    <property type="term" value="P:glycerophospholipid biosynthetic process"/>
    <property type="evidence" value="ECO:0007669"/>
    <property type="project" value="TreeGrafter"/>
</dbReference>
<dbReference type="FunFam" id="1.10.1040.10:FF:000001">
    <property type="entry name" value="Glycerol-3-phosphate dehydrogenase [NAD(P)+]"/>
    <property type="match status" value="1"/>
</dbReference>
<dbReference type="FunFam" id="3.40.50.720:FF:000019">
    <property type="entry name" value="Glycerol-3-phosphate dehydrogenase [NAD(P)+]"/>
    <property type="match status" value="1"/>
</dbReference>
<dbReference type="Gene3D" id="1.10.1040.10">
    <property type="entry name" value="N-(1-d-carboxylethyl)-l-norvaline Dehydrogenase, domain 2"/>
    <property type="match status" value="1"/>
</dbReference>
<dbReference type="Gene3D" id="3.40.50.720">
    <property type="entry name" value="NAD(P)-binding Rossmann-like Domain"/>
    <property type="match status" value="1"/>
</dbReference>
<dbReference type="HAMAP" id="MF_00394">
    <property type="entry name" value="NAD_Glyc3P_dehydrog"/>
    <property type="match status" value="1"/>
</dbReference>
<dbReference type="InterPro" id="IPR008927">
    <property type="entry name" value="6-PGluconate_DH-like_C_sf"/>
</dbReference>
<dbReference type="InterPro" id="IPR013328">
    <property type="entry name" value="6PGD_dom2"/>
</dbReference>
<dbReference type="InterPro" id="IPR006168">
    <property type="entry name" value="G3P_DH_NAD-dep"/>
</dbReference>
<dbReference type="InterPro" id="IPR006109">
    <property type="entry name" value="G3P_DH_NAD-dep_C"/>
</dbReference>
<dbReference type="InterPro" id="IPR011128">
    <property type="entry name" value="G3P_DH_NAD-dep_N"/>
</dbReference>
<dbReference type="InterPro" id="IPR036291">
    <property type="entry name" value="NAD(P)-bd_dom_sf"/>
</dbReference>
<dbReference type="NCBIfam" id="NF000940">
    <property type="entry name" value="PRK00094.1-2"/>
    <property type="match status" value="1"/>
</dbReference>
<dbReference type="NCBIfam" id="NF000942">
    <property type="entry name" value="PRK00094.1-4"/>
    <property type="match status" value="1"/>
</dbReference>
<dbReference type="NCBIfam" id="NF000946">
    <property type="entry name" value="PRK00094.2-4"/>
    <property type="match status" value="1"/>
</dbReference>
<dbReference type="PANTHER" id="PTHR11728">
    <property type="entry name" value="GLYCEROL-3-PHOSPHATE DEHYDROGENASE"/>
    <property type="match status" value="1"/>
</dbReference>
<dbReference type="PANTHER" id="PTHR11728:SF1">
    <property type="entry name" value="GLYCEROL-3-PHOSPHATE DEHYDROGENASE [NAD(+)] 2, CHLOROPLASTIC"/>
    <property type="match status" value="1"/>
</dbReference>
<dbReference type="Pfam" id="PF07479">
    <property type="entry name" value="NAD_Gly3P_dh_C"/>
    <property type="match status" value="1"/>
</dbReference>
<dbReference type="Pfam" id="PF01210">
    <property type="entry name" value="NAD_Gly3P_dh_N"/>
    <property type="match status" value="1"/>
</dbReference>
<dbReference type="PIRSF" id="PIRSF000114">
    <property type="entry name" value="Glycerol-3-P_dh"/>
    <property type="match status" value="1"/>
</dbReference>
<dbReference type="PRINTS" id="PR00077">
    <property type="entry name" value="GPDHDRGNASE"/>
</dbReference>
<dbReference type="SUPFAM" id="SSF48179">
    <property type="entry name" value="6-phosphogluconate dehydrogenase C-terminal domain-like"/>
    <property type="match status" value="1"/>
</dbReference>
<dbReference type="SUPFAM" id="SSF51735">
    <property type="entry name" value="NAD(P)-binding Rossmann-fold domains"/>
    <property type="match status" value="1"/>
</dbReference>
<dbReference type="PROSITE" id="PS00957">
    <property type="entry name" value="NAD_G3PDH"/>
    <property type="match status" value="1"/>
</dbReference>
<gene>
    <name evidence="1" type="primary">gpsA</name>
    <name type="ordered locus">PSPTO_2213</name>
</gene>
<comment type="function">
    <text evidence="1">Catalyzes the reduction of the glycolytic intermediate dihydroxyacetone phosphate (DHAP) to sn-glycerol 3-phosphate (G3P), the key precursor for phospholipid synthesis.</text>
</comment>
<comment type="catalytic activity">
    <reaction evidence="1">
        <text>sn-glycerol 3-phosphate + NAD(+) = dihydroxyacetone phosphate + NADH + H(+)</text>
        <dbReference type="Rhea" id="RHEA:11092"/>
        <dbReference type="ChEBI" id="CHEBI:15378"/>
        <dbReference type="ChEBI" id="CHEBI:57540"/>
        <dbReference type="ChEBI" id="CHEBI:57597"/>
        <dbReference type="ChEBI" id="CHEBI:57642"/>
        <dbReference type="ChEBI" id="CHEBI:57945"/>
        <dbReference type="EC" id="1.1.1.94"/>
    </reaction>
    <physiologicalReaction direction="right-to-left" evidence="1">
        <dbReference type="Rhea" id="RHEA:11094"/>
    </physiologicalReaction>
</comment>
<comment type="catalytic activity">
    <reaction evidence="1">
        <text>sn-glycerol 3-phosphate + NADP(+) = dihydroxyacetone phosphate + NADPH + H(+)</text>
        <dbReference type="Rhea" id="RHEA:11096"/>
        <dbReference type="ChEBI" id="CHEBI:15378"/>
        <dbReference type="ChEBI" id="CHEBI:57597"/>
        <dbReference type="ChEBI" id="CHEBI:57642"/>
        <dbReference type="ChEBI" id="CHEBI:57783"/>
        <dbReference type="ChEBI" id="CHEBI:58349"/>
        <dbReference type="EC" id="1.1.1.94"/>
    </reaction>
    <physiologicalReaction direction="right-to-left" evidence="1">
        <dbReference type="Rhea" id="RHEA:11098"/>
    </physiologicalReaction>
</comment>
<comment type="pathway">
    <text evidence="1">Membrane lipid metabolism; glycerophospholipid metabolism.</text>
</comment>
<comment type="subcellular location">
    <subcellularLocation>
        <location evidence="1">Cytoplasm</location>
    </subcellularLocation>
</comment>
<comment type="similarity">
    <text evidence="1">Belongs to the NAD-dependent glycerol-3-phosphate dehydrogenase family.</text>
</comment>